<reference key="1">
    <citation type="journal article" date="2011" name="Infect. Immun.">
        <title>A comparative genomic analysis of diverse clonal types of enterotoxigenic Escherichia coli reveals pathovar-specific conservation.</title>
        <authorList>
            <person name="Sahl J.W."/>
            <person name="Steinsland H."/>
            <person name="Redman J.C."/>
            <person name="Angiuoli S.V."/>
            <person name="Nataro J.P."/>
            <person name="Sommerfelt H."/>
            <person name="Rasko D.A."/>
        </authorList>
    </citation>
    <scope>NUCLEOTIDE SEQUENCE [LARGE SCALE GENOMIC DNA]</scope>
    <source>
        <strain>TW11681</strain>
    </source>
</reference>
<reference key="2">
    <citation type="journal article" date="2019" name="Nature">
        <title>Cyclic GMP-AMP signalling protects bacteria against viral infection.</title>
        <authorList>
            <person name="Cohen D."/>
            <person name="Melamed S."/>
            <person name="Millman A."/>
            <person name="Shulman G."/>
            <person name="Oppenheimer-Shaanan Y."/>
            <person name="Kacen A."/>
            <person name="Doron S."/>
            <person name="Amitai G."/>
            <person name="Sorek R."/>
        </authorList>
    </citation>
    <scope>FUNCTION AS A PHOSPHOLIPASE</scope>
    <scope>ANTIVIRAL DEFENSE</scope>
    <scope>NOMENCLATURE</scope>
    <scope>OPERON STRUCTURE</scope>
    <scope>MUTAGENESIS OF SER-60</scope>
    <source>
        <strain>TW11681</strain>
    </source>
</reference>
<reference key="3">
    <citation type="journal article" date="2020" name="Nat. Microbiol.">
        <title>Diversity and classification of cyclic-oligonucleotide-based anti-phage signalling systems.</title>
        <authorList>
            <person name="Millman A."/>
            <person name="Melamed S."/>
            <person name="Amitai G."/>
            <person name="Sorek R."/>
        </authorList>
    </citation>
    <scope>CLASSIFICATION AND NOMENCLATURE</scope>
</reference>
<reference key="4">
    <citation type="journal article" date="2023" name="Nature">
        <title>Ubiquitin-like conjugation by bacterial cGAS enhances anti-phage defence.</title>
        <authorList>
            <person name="Jenson J.M."/>
            <person name="Li T."/>
            <person name="Du F."/>
            <person name="Ea C.K."/>
            <person name="Chen Z.J."/>
        </authorList>
    </citation>
    <scope>ANTIVIRAL DEFENSE</scope>
    <scope>MUTAGENESIS OF SER-60</scope>
    <source>
        <strain>TW11681</strain>
    </source>
</reference>
<feature type="chain" id="PRO_0000451860" description="cGAMP-activated phospholipase">
    <location>
        <begin position="1"/>
        <end position="356"/>
    </location>
</feature>
<feature type="domain" description="PNPLA" evidence="3">
    <location>
        <begin position="15"/>
        <end position="206"/>
    </location>
</feature>
<feature type="short sequence motif" description="GXGXXG" evidence="3">
    <location>
        <begin position="19"/>
        <end position="24"/>
    </location>
</feature>
<feature type="short sequence motif" description="GXSXG" evidence="3">
    <location>
        <begin position="58"/>
        <end position="62"/>
    </location>
</feature>
<feature type="short sequence motif" description="DGA/G" evidence="3">
    <location>
        <begin position="193"/>
        <end position="195"/>
    </location>
</feature>
<feature type="active site" description="Nucleophile" evidence="3">
    <location>
        <position position="60"/>
    </location>
</feature>
<feature type="active site" description="Proton acceptor" evidence="3">
    <location>
        <position position="193"/>
    </location>
</feature>
<feature type="mutagenesis site" description="Loss of defense against phage." evidence="4 5">
    <original>S</original>
    <variation>A</variation>
    <location>
        <position position="60"/>
    </location>
</feature>
<organism>
    <name type="scientific">Escherichia coli (strain TW11681)</name>
    <dbReference type="NCBI Taxonomy" id="913088"/>
    <lineage>
        <taxon>Bacteria</taxon>
        <taxon>Pseudomonadati</taxon>
        <taxon>Pseudomonadota</taxon>
        <taxon>Gammaproteobacteria</taxon>
        <taxon>Enterobacterales</taxon>
        <taxon>Enterobacteriaceae</taxon>
        <taxon>Escherichia</taxon>
    </lineage>
</organism>
<name>CAPV_ECOTW</name>
<evidence type="ECO:0000250" key="1">
    <source>
        <dbReference type="UniProtKB" id="Q6XGD4"/>
    </source>
</evidence>
<evidence type="ECO:0000250" key="2">
    <source>
        <dbReference type="UniProtKB" id="Q9KVG8"/>
    </source>
</evidence>
<evidence type="ECO:0000255" key="3">
    <source>
        <dbReference type="PROSITE-ProRule" id="PRU01161"/>
    </source>
</evidence>
<evidence type="ECO:0000269" key="4">
    <source>
    </source>
</evidence>
<evidence type="ECO:0000269" key="5">
    <source>
    </source>
</evidence>
<evidence type="ECO:0000303" key="6">
    <source>
    </source>
</evidence>
<evidence type="ECO:0000303" key="7">
    <source>
    </source>
</evidence>
<evidence type="ECO:0000305" key="8"/>
<evidence type="ECO:0000305" key="9">
    <source>
    </source>
</evidence>
<keyword id="KW-0051">Antiviral defense</keyword>
<keyword id="KW-0378">Hydrolase</keyword>
<keyword id="KW-0442">Lipid degradation</keyword>
<keyword id="KW-0443">Lipid metabolism</keyword>
<dbReference type="EC" id="3.1.1.32" evidence="1"/>
<dbReference type="EMBL" id="AELD01000001">
    <property type="status" value="NOT_ANNOTATED_CDS"/>
    <property type="molecule type" value="Genomic_DNA"/>
</dbReference>
<dbReference type="RefSeq" id="WP_001286317.1">
    <property type="nucleotide sequence ID" value="NZ_CP035855.1"/>
</dbReference>
<dbReference type="SMR" id="P0DTE9"/>
<dbReference type="GO" id="GO:0008970">
    <property type="term" value="F:phospholipase A1 activity"/>
    <property type="evidence" value="ECO:0007669"/>
    <property type="project" value="UniProtKB-EC"/>
</dbReference>
<dbReference type="GO" id="GO:0051607">
    <property type="term" value="P:defense response to virus"/>
    <property type="evidence" value="ECO:0007669"/>
    <property type="project" value="UniProtKB-KW"/>
</dbReference>
<dbReference type="GO" id="GO:0016042">
    <property type="term" value="P:lipid catabolic process"/>
    <property type="evidence" value="ECO:0007669"/>
    <property type="project" value="UniProtKB-KW"/>
</dbReference>
<dbReference type="CDD" id="cd07199">
    <property type="entry name" value="Pat17_PNPLA8_PNPLA9_like"/>
    <property type="match status" value="1"/>
</dbReference>
<dbReference type="Gene3D" id="3.40.1090.10">
    <property type="entry name" value="Cytosolic phospholipase A2 catalytic domain"/>
    <property type="match status" value="1"/>
</dbReference>
<dbReference type="InterPro" id="IPR016035">
    <property type="entry name" value="Acyl_Trfase/lysoPLipase"/>
</dbReference>
<dbReference type="InterPro" id="IPR002641">
    <property type="entry name" value="PNPLA_dom"/>
</dbReference>
<dbReference type="NCBIfam" id="NF041079">
    <property type="entry name" value="CBASS_lipase"/>
    <property type="match status" value="1"/>
</dbReference>
<dbReference type="PANTHER" id="PTHR32176">
    <property type="entry name" value="XYLOSE ISOMERASE"/>
    <property type="match status" value="1"/>
</dbReference>
<dbReference type="PANTHER" id="PTHR32176:SF92">
    <property type="entry name" value="XYLOSE ISOMERASE"/>
    <property type="match status" value="1"/>
</dbReference>
<dbReference type="Pfam" id="PF01734">
    <property type="entry name" value="Patatin"/>
    <property type="match status" value="1"/>
</dbReference>
<dbReference type="SUPFAM" id="SSF52151">
    <property type="entry name" value="FabD/lysophospholipase-like"/>
    <property type="match status" value="1"/>
</dbReference>
<dbReference type="PROSITE" id="PS51635">
    <property type="entry name" value="PNPLA"/>
    <property type="match status" value="1"/>
</dbReference>
<proteinExistence type="evidence at protein level"/>
<protein>
    <recommendedName>
        <fullName evidence="6">cGAMP-activated phospholipase</fullName>
        <ecNumber evidence="1">3.1.1.32</ecNumber>
    </recommendedName>
    <alternativeName>
        <fullName>3',3'-cGAMP receptor CapV</fullName>
    </alternativeName>
    <alternativeName>
        <fullName>Patatin-like phospholipase</fullName>
    </alternativeName>
</protein>
<sequence>MSDVSAVDKPRVRVLSLNGGGARGMFTISILAEIERILARKHPHQDIKIGDYFDLITGTSIGGILALGLATGKSARELESVFFDKAKDIFPTRWSLVNLCKALCAPIYNSSPLRETIEMMIGAETTFNDLTRRVMIPAVNLSTGKPLFFKTPHNPDFTRDGPLKLIDAALATSAAPTYFAPHYCKDLRSYFADGGLVANNPSYIGLLEVFRDMKSDFDVSHKDVYILNIGTVGEDYSLSPSLLSKKRWTGYCHLWGMGKRLVLTTMTANQHLHKNMLLRELALHDALDNYLYLDEVIPNEAASDITLDNASDSSLQNLSARGKQLANVQFAQNQKLKNFFISPAKPFKRTDVQEKL</sequence>
<accession>P0DTE9</accession>
<gene>
    <name evidence="6" type="primary">capV</name>
    <name type="ORF">ESG_RS0100140</name>
</gene>
<comment type="function">
    <text evidence="4 5 7">Effector phospholipase of a CBASS antiviral system (PubMed:31533127). CBASS (cyclic oligonucleotide-based antiphage signaling system) provides immunity against bacteriophages. The CD-NTase protein (DncV) synthesizes cyclic nucleotides in response to infection; these serve as specific second messenger signals. The signals activate a diverse range of effectors, leading to bacterial cell death and thus abortive phage infection (PubMed:31533127, PubMed:36848932). A type II-A(GA) CBASS system (PubMed:32839535).</text>
</comment>
<comment type="function">
    <text evidence="2 4">Phospholipase that is activated upon binding to the cyclic dinucleotide (CDN) second messenger 3',3'-cyclic GMP-AMP (cGAMP) (PubMed:31533127). Degrades phospholipids in the cell membrane (By similarity).</text>
</comment>
<comment type="function">
    <text evidence="4 5">Protects E.coli against phage infection (PubMed:31533127, PubMed:36848932). When capV and dncV are introduced in E.coli MG1655 there is 1000-fold protection against phage P1; protection against other phage (T2, T4, T5, T6 and lambda-vir) requires the 2 subsequent genes (cap2 and cap3) (PubMed:31533127). Upon P1 phage infection the activating molecule is produced between 30 and 40 minutes (PubMed:31533127). Activation leads to bacterial cell lysis and death, which occurs before the phage has finished its replication cycle, thus protecting non-infected bacteria by aborting the phage infection and preventing its propagation (PubMed:31533127). In another paper the capV-dncV-cap2-cap3 operon gives 10(4)-10(5)-fold protection against phages lambda, T2, T4 and T6, about 1000-fold protection against P1 and 10-fold protection against T5 (PubMed:36848932).</text>
</comment>
<comment type="catalytic activity">
    <reaction evidence="2">
        <text>a 1,2-diacyl-sn-glycero-3-phosphocholine + H2O = a 2-acyl-sn-glycero-3-phosphocholine + a fatty acid + H(+)</text>
        <dbReference type="Rhea" id="RHEA:18689"/>
        <dbReference type="ChEBI" id="CHEBI:15377"/>
        <dbReference type="ChEBI" id="CHEBI:15378"/>
        <dbReference type="ChEBI" id="CHEBI:28868"/>
        <dbReference type="ChEBI" id="CHEBI:57643"/>
        <dbReference type="ChEBI" id="CHEBI:57875"/>
        <dbReference type="EC" id="3.1.1.32"/>
    </reaction>
    <physiologicalReaction direction="left-to-right" evidence="2">
        <dbReference type="Rhea" id="RHEA:18690"/>
    </physiologicalReaction>
</comment>
<comment type="catalytic activity">
    <reaction evidence="2">
        <text>1,2-di-(9Z-octadecenoyl)-sn-glycero-3-phosphoethanolamine + 2 H2O = sn-glycero-3-phosphoethanolamine + 2 (9Z)-octadecenoate + 2 H(+)</text>
        <dbReference type="Rhea" id="RHEA:60624"/>
        <dbReference type="ChEBI" id="CHEBI:15377"/>
        <dbReference type="ChEBI" id="CHEBI:15378"/>
        <dbReference type="ChEBI" id="CHEBI:30823"/>
        <dbReference type="ChEBI" id="CHEBI:74986"/>
        <dbReference type="ChEBI" id="CHEBI:143890"/>
    </reaction>
    <physiologicalReaction direction="left-to-right" evidence="2">
        <dbReference type="Rhea" id="RHEA:60625"/>
    </physiologicalReaction>
</comment>
<comment type="activity regulation">
    <text evidence="4">Phospholipase activity is specifically activated upon 3',3'-cGAMP binding, which is produced by the cognate cyclic nucleotide synthase encoded in the same operon.</text>
</comment>
<comment type="induction">
    <text evidence="9">Part of a CBASS operon consisting of capV-dncV-cap2-cap3.</text>
</comment>
<comment type="similarity">
    <text evidence="8">Belongs to the patatin family.</text>
</comment>